<evidence type="ECO:0000250" key="1"/>
<evidence type="ECO:0000255" key="2"/>
<evidence type="ECO:0000269" key="3">
    <source>
    </source>
</evidence>
<evidence type="ECO:0000269" key="4">
    <source>
    </source>
</evidence>
<evidence type="ECO:0000305" key="5"/>
<evidence type="ECO:0007829" key="6">
    <source>
        <dbReference type="PDB" id="8XKU"/>
    </source>
</evidence>
<evidence type="ECO:0007829" key="7">
    <source>
        <dbReference type="PDB" id="8XKV"/>
    </source>
</evidence>
<reference key="1">
    <citation type="journal article" date="2000" name="Nature">
        <title>Sequence and analysis of chromosome 1 of the plant Arabidopsis thaliana.</title>
        <authorList>
            <person name="Theologis A."/>
            <person name="Ecker J.R."/>
            <person name="Palm C.J."/>
            <person name="Federspiel N.A."/>
            <person name="Kaul S."/>
            <person name="White O."/>
            <person name="Alonso J."/>
            <person name="Altafi H."/>
            <person name="Araujo R."/>
            <person name="Bowman C.L."/>
            <person name="Brooks S.Y."/>
            <person name="Buehler E."/>
            <person name="Chan A."/>
            <person name="Chao Q."/>
            <person name="Chen H."/>
            <person name="Cheuk R.F."/>
            <person name="Chin C.W."/>
            <person name="Chung M.K."/>
            <person name="Conn L."/>
            <person name="Conway A.B."/>
            <person name="Conway A.R."/>
            <person name="Creasy T.H."/>
            <person name="Dewar K."/>
            <person name="Dunn P."/>
            <person name="Etgu P."/>
            <person name="Feldblyum T.V."/>
            <person name="Feng J.-D."/>
            <person name="Fong B."/>
            <person name="Fujii C.Y."/>
            <person name="Gill J.E."/>
            <person name="Goldsmith A.D."/>
            <person name="Haas B."/>
            <person name="Hansen N.F."/>
            <person name="Hughes B."/>
            <person name="Huizar L."/>
            <person name="Hunter J.L."/>
            <person name="Jenkins J."/>
            <person name="Johnson-Hopson C."/>
            <person name="Khan S."/>
            <person name="Khaykin E."/>
            <person name="Kim C.J."/>
            <person name="Koo H.L."/>
            <person name="Kremenetskaia I."/>
            <person name="Kurtz D.B."/>
            <person name="Kwan A."/>
            <person name="Lam B."/>
            <person name="Langin-Hooper S."/>
            <person name="Lee A."/>
            <person name="Lee J.M."/>
            <person name="Lenz C.A."/>
            <person name="Li J.H."/>
            <person name="Li Y.-P."/>
            <person name="Lin X."/>
            <person name="Liu S.X."/>
            <person name="Liu Z.A."/>
            <person name="Luros J.S."/>
            <person name="Maiti R."/>
            <person name="Marziali A."/>
            <person name="Militscher J."/>
            <person name="Miranda M."/>
            <person name="Nguyen M."/>
            <person name="Nierman W.C."/>
            <person name="Osborne B.I."/>
            <person name="Pai G."/>
            <person name="Peterson J."/>
            <person name="Pham P.K."/>
            <person name="Rizzo M."/>
            <person name="Rooney T."/>
            <person name="Rowley D."/>
            <person name="Sakano H."/>
            <person name="Salzberg S.L."/>
            <person name="Schwartz J.R."/>
            <person name="Shinn P."/>
            <person name="Southwick A.M."/>
            <person name="Sun H."/>
            <person name="Tallon L.J."/>
            <person name="Tambunga G."/>
            <person name="Toriumi M.J."/>
            <person name="Town C.D."/>
            <person name="Utterback T."/>
            <person name="Van Aken S."/>
            <person name="Vaysberg M."/>
            <person name="Vysotskaia V.S."/>
            <person name="Walker M."/>
            <person name="Wu D."/>
            <person name="Yu G."/>
            <person name="Fraser C.M."/>
            <person name="Venter J.C."/>
            <person name="Davis R.W."/>
        </authorList>
    </citation>
    <scope>NUCLEOTIDE SEQUENCE [LARGE SCALE GENOMIC DNA]</scope>
    <source>
        <strain>cv. Columbia</strain>
    </source>
</reference>
<reference key="2">
    <citation type="journal article" date="2017" name="Plant J.">
        <title>Araport11: a complete reannotation of the Arabidopsis thaliana reference genome.</title>
        <authorList>
            <person name="Cheng C.Y."/>
            <person name="Krishnakumar V."/>
            <person name="Chan A.P."/>
            <person name="Thibaud-Nissen F."/>
            <person name="Schobel S."/>
            <person name="Town C.D."/>
        </authorList>
    </citation>
    <scope>GENOME REANNOTATION</scope>
    <source>
        <strain>cv. Columbia</strain>
    </source>
</reference>
<reference key="3">
    <citation type="journal article" date="2003" name="Science">
        <title>Empirical analysis of transcriptional activity in the Arabidopsis genome.</title>
        <authorList>
            <person name="Yamada K."/>
            <person name="Lim J."/>
            <person name="Dale J.M."/>
            <person name="Chen H."/>
            <person name="Shinn P."/>
            <person name="Palm C.J."/>
            <person name="Southwick A.M."/>
            <person name="Wu H.C."/>
            <person name="Kim C.J."/>
            <person name="Nguyen M."/>
            <person name="Pham P.K."/>
            <person name="Cheuk R.F."/>
            <person name="Karlin-Newmann G."/>
            <person name="Liu S.X."/>
            <person name="Lam B."/>
            <person name="Sakano H."/>
            <person name="Wu T."/>
            <person name="Yu G."/>
            <person name="Miranda M."/>
            <person name="Quach H.L."/>
            <person name="Tripp M."/>
            <person name="Chang C.H."/>
            <person name="Lee J.M."/>
            <person name="Toriumi M.J."/>
            <person name="Chan M.M."/>
            <person name="Tang C.C."/>
            <person name="Onodera C.S."/>
            <person name="Deng J.M."/>
            <person name="Akiyama K."/>
            <person name="Ansari Y."/>
            <person name="Arakawa T."/>
            <person name="Banh J."/>
            <person name="Banno F."/>
            <person name="Bowser L."/>
            <person name="Brooks S.Y."/>
            <person name="Carninci P."/>
            <person name="Chao Q."/>
            <person name="Choy N."/>
            <person name="Enju A."/>
            <person name="Goldsmith A.D."/>
            <person name="Gurjal M."/>
            <person name="Hansen N.F."/>
            <person name="Hayashizaki Y."/>
            <person name="Johnson-Hopson C."/>
            <person name="Hsuan V.W."/>
            <person name="Iida K."/>
            <person name="Karnes M."/>
            <person name="Khan S."/>
            <person name="Koesema E."/>
            <person name="Ishida J."/>
            <person name="Jiang P.X."/>
            <person name="Jones T."/>
            <person name="Kawai J."/>
            <person name="Kamiya A."/>
            <person name="Meyers C."/>
            <person name="Nakajima M."/>
            <person name="Narusaka M."/>
            <person name="Seki M."/>
            <person name="Sakurai T."/>
            <person name="Satou M."/>
            <person name="Tamse R."/>
            <person name="Vaysberg M."/>
            <person name="Wallender E.K."/>
            <person name="Wong C."/>
            <person name="Yamamura Y."/>
            <person name="Yuan S."/>
            <person name="Shinozaki K."/>
            <person name="Davis R.W."/>
            <person name="Theologis A."/>
            <person name="Ecker J.R."/>
        </authorList>
    </citation>
    <scope>NUCLEOTIDE SEQUENCE [LARGE SCALE MRNA] OF 363-1008</scope>
    <source>
        <strain>cv. Columbia</strain>
    </source>
</reference>
<reference key="4">
    <citation type="journal article" date="2003" name="Plant Cell">
        <title>Coordinated regulation and complex formation of yellow variegated1 and yellow variegated2, chloroplastic FtsH metalloproteases involved in the repair cycle of photosystem II in Arabidopsis thylakoid membranes.</title>
        <authorList>
            <person name="Sakamoto W."/>
            <person name="Zaltsman A."/>
            <person name="Adam Z."/>
            <person name="Takahashi Y."/>
        </authorList>
    </citation>
    <scope>SUBCELLULAR LOCATION</scope>
</reference>
<reference key="5">
    <citation type="journal article" date="2004" name="Plant Physiol.">
        <title>Expression in multigene families. Analysis of chloroplast and mitochondrial proteases.</title>
        <authorList>
            <person name="Sinvany-Villalobo G."/>
            <person name="Davydov O."/>
            <person name="Ben-Ari G."/>
            <person name="Zaltsman A."/>
            <person name="Raskind A."/>
            <person name="Adam Z."/>
        </authorList>
    </citation>
    <scope>INDUCTION BY HIGH LIGHT</scope>
</reference>
<reference key="6">
    <citation type="journal article" date="2004" name="Plant J.">
        <title>The Arabidopsis FtsH metalloprotease gene family: interchangeability of subunits in chloroplast oligomeric complexes.</title>
        <authorList>
            <person name="Yu F."/>
            <person name="Park S."/>
            <person name="Rodermel S.R."/>
        </authorList>
    </citation>
    <scope>GENE FAMILY</scope>
    <scope>NOMENCLATURE</scope>
</reference>
<comment type="function">
    <text>Probable ATP-dependent zinc metallopeptidase.</text>
</comment>
<comment type="cofactor">
    <cofactor evidence="1">
        <name>Zn(2+)</name>
        <dbReference type="ChEBI" id="CHEBI:29105"/>
    </cofactor>
    <text evidence="1">Binds 1 zinc ion per subunit.</text>
</comment>
<comment type="subcellular location">
    <subcellularLocation>
        <location evidence="3">Plastid</location>
        <location evidence="3">Chloroplast thylakoid membrane</location>
        <topology evidence="3">Multi-pass membrane protein</topology>
        <orientation evidence="3">Stromal side</orientation>
    </subcellularLocation>
</comment>
<comment type="induction">
    <text evidence="4">By high light.</text>
</comment>
<comment type="similarity">
    <text evidence="5">In the N-terminal section; belongs to the AAA ATPase family.</text>
</comment>
<comment type="similarity">
    <text evidence="5">In the C-terminal section; belongs to the peptidase M41 family.</text>
</comment>
<comment type="sequence caution" evidence="5">
    <conflict type="erroneous gene model prediction">
        <sequence resource="EMBL-CDS" id="AAD30220"/>
    </conflict>
</comment>
<dbReference type="EC" id="3.4.24.-"/>
<dbReference type="EMBL" id="AC007202">
    <property type="protein sequence ID" value="AAD30220.1"/>
    <property type="status" value="ALT_SEQ"/>
    <property type="molecule type" value="Genomic_DNA"/>
</dbReference>
<dbReference type="EMBL" id="CP002684">
    <property type="protein sequence ID" value="AEE36264.1"/>
    <property type="molecule type" value="Genomic_DNA"/>
</dbReference>
<dbReference type="EMBL" id="AY035166">
    <property type="protein sequence ID" value="AAK59670.2"/>
    <property type="molecule type" value="mRNA"/>
</dbReference>
<dbReference type="PIR" id="A96827">
    <property type="entry name" value="A96827"/>
</dbReference>
<dbReference type="RefSeq" id="NP_565212.1">
    <property type="nucleotide sequence ID" value="NM_106604.4"/>
</dbReference>
<dbReference type="PDB" id="8XKU">
    <property type="method" value="EM"/>
    <property type="resolution" value="3.20 A"/>
    <property type="chains" value="B=1-1008"/>
</dbReference>
<dbReference type="PDB" id="8XKV">
    <property type="method" value="EM"/>
    <property type="resolution" value="3.30 A"/>
    <property type="chains" value="B=1-1008"/>
</dbReference>
<dbReference type="PDBsum" id="8XKU"/>
<dbReference type="PDBsum" id="8XKV"/>
<dbReference type="EMDB" id="EMD-38425"/>
<dbReference type="EMDB" id="EMD-38428"/>
<dbReference type="SMR" id="Q9SAJ3"/>
<dbReference type="BioGRID" id="29513">
    <property type="interactions" value="1"/>
</dbReference>
<dbReference type="FunCoup" id="Q9SAJ3">
    <property type="interactions" value="753"/>
</dbReference>
<dbReference type="STRING" id="3702.Q9SAJ3"/>
<dbReference type="MEROPS" id="M41.A06"/>
<dbReference type="iPTMnet" id="Q9SAJ3"/>
<dbReference type="PaxDb" id="3702-AT1G79560.1"/>
<dbReference type="ProteomicsDB" id="230002"/>
<dbReference type="EnsemblPlants" id="AT1G79560.1">
    <property type="protein sequence ID" value="AT1G79560.1"/>
    <property type="gene ID" value="AT1G79560"/>
</dbReference>
<dbReference type="GeneID" id="844294"/>
<dbReference type="Gramene" id="AT1G79560.1">
    <property type="protein sequence ID" value="AT1G79560.1"/>
    <property type="gene ID" value="AT1G79560"/>
</dbReference>
<dbReference type="KEGG" id="ath:AT1G79560"/>
<dbReference type="Araport" id="AT1G79560"/>
<dbReference type="TAIR" id="AT1G79560">
    <property type="gene designation" value="FTSH12"/>
</dbReference>
<dbReference type="eggNOG" id="KOG0731">
    <property type="taxonomic scope" value="Eukaryota"/>
</dbReference>
<dbReference type="HOGENOM" id="CLU_000688_16_0_1"/>
<dbReference type="InParanoid" id="Q9SAJ3"/>
<dbReference type="PhylomeDB" id="Q9SAJ3"/>
<dbReference type="BRENDA" id="3.4.24.B20">
    <property type="organism ID" value="399"/>
</dbReference>
<dbReference type="PRO" id="PR:Q9SAJ3"/>
<dbReference type="Proteomes" id="UP000006548">
    <property type="component" value="Chromosome 1"/>
</dbReference>
<dbReference type="ExpressionAtlas" id="Q9SAJ3">
    <property type="expression patterns" value="baseline and differential"/>
</dbReference>
<dbReference type="GO" id="GO:0009507">
    <property type="term" value="C:chloroplast"/>
    <property type="evidence" value="ECO:0000314"/>
    <property type="project" value="TAIR"/>
</dbReference>
<dbReference type="GO" id="GO:0009941">
    <property type="term" value="C:chloroplast envelope"/>
    <property type="evidence" value="ECO:0007005"/>
    <property type="project" value="TAIR"/>
</dbReference>
<dbReference type="GO" id="GO:0009706">
    <property type="term" value="C:chloroplast inner membrane"/>
    <property type="evidence" value="ECO:0000314"/>
    <property type="project" value="TAIR"/>
</dbReference>
<dbReference type="GO" id="GO:0009535">
    <property type="term" value="C:chloroplast thylakoid membrane"/>
    <property type="evidence" value="ECO:0007669"/>
    <property type="project" value="UniProtKB-SubCell"/>
</dbReference>
<dbReference type="GO" id="GO:0005739">
    <property type="term" value="C:mitochondrion"/>
    <property type="evidence" value="ECO:0007005"/>
    <property type="project" value="TAIR"/>
</dbReference>
<dbReference type="GO" id="GO:0009536">
    <property type="term" value="C:plastid"/>
    <property type="evidence" value="ECO:0007005"/>
    <property type="project" value="TAIR"/>
</dbReference>
<dbReference type="GO" id="GO:0062091">
    <property type="term" value="C:Ycf2/FtsHi complex"/>
    <property type="evidence" value="ECO:0000314"/>
    <property type="project" value="TAIR"/>
</dbReference>
<dbReference type="GO" id="GO:0005524">
    <property type="term" value="F:ATP binding"/>
    <property type="evidence" value="ECO:0007669"/>
    <property type="project" value="UniProtKB-KW"/>
</dbReference>
<dbReference type="GO" id="GO:0016887">
    <property type="term" value="F:ATP hydrolysis activity"/>
    <property type="evidence" value="ECO:0007669"/>
    <property type="project" value="InterPro"/>
</dbReference>
<dbReference type="GO" id="GO:0004176">
    <property type="term" value="F:ATP-dependent peptidase activity"/>
    <property type="evidence" value="ECO:0000250"/>
    <property type="project" value="TAIR"/>
</dbReference>
<dbReference type="GO" id="GO:0016464">
    <property type="term" value="F:chloroplast protein-transporting ATPase activity"/>
    <property type="evidence" value="ECO:0000314"/>
    <property type="project" value="TAIR"/>
</dbReference>
<dbReference type="GO" id="GO:0046872">
    <property type="term" value="F:metal ion binding"/>
    <property type="evidence" value="ECO:0007669"/>
    <property type="project" value="UniProtKB-KW"/>
</dbReference>
<dbReference type="GO" id="GO:0004222">
    <property type="term" value="F:metalloendopeptidase activity"/>
    <property type="evidence" value="ECO:0007669"/>
    <property type="project" value="InterPro"/>
</dbReference>
<dbReference type="GO" id="GO:0045037">
    <property type="term" value="P:protein import into chloroplast stroma"/>
    <property type="evidence" value="ECO:0000315"/>
    <property type="project" value="TAIR"/>
</dbReference>
<dbReference type="GO" id="GO:0006508">
    <property type="term" value="P:proteolysis"/>
    <property type="evidence" value="ECO:0007669"/>
    <property type="project" value="UniProtKB-KW"/>
</dbReference>
<dbReference type="FunFam" id="1.10.8.60:FF:000101">
    <property type="entry name" value="ATP-dependent zinc metalloprotease FTSH 12, chloroplastic"/>
    <property type="match status" value="1"/>
</dbReference>
<dbReference type="FunFam" id="1.20.58.760:FF:000014">
    <property type="entry name" value="ATP-dependent zinc metalloprotease FTSH 12, chloroplastic"/>
    <property type="match status" value="1"/>
</dbReference>
<dbReference type="FunFam" id="3.40.50.300:FF:001118">
    <property type="entry name" value="ATP-dependent zinc metalloprotease FTSH 12, chloroplastic"/>
    <property type="match status" value="1"/>
</dbReference>
<dbReference type="Gene3D" id="1.10.8.60">
    <property type="match status" value="1"/>
</dbReference>
<dbReference type="Gene3D" id="3.40.50.300">
    <property type="entry name" value="P-loop containing nucleotide triphosphate hydrolases"/>
    <property type="match status" value="1"/>
</dbReference>
<dbReference type="Gene3D" id="1.20.58.760">
    <property type="entry name" value="Peptidase M41"/>
    <property type="match status" value="1"/>
</dbReference>
<dbReference type="InterPro" id="IPR003593">
    <property type="entry name" value="AAA+_ATPase"/>
</dbReference>
<dbReference type="InterPro" id="IPR041569">
    <property type="entry name" value="AAA_lid_3"/>
</dbReference>
<dbReference type="InterPro" id="IPR050928">
    <property type="entry name" value="ATP-dep_Zn_Metalloprotease"/>
</dbReference>
<dbReference type="InterPro" id="IPR003959">
    <property type="entry name" value="ATPase_AAA_core"/>
</dbReference>
<dbReference type="InterPro" id="IPR027417">
    <property type="entry name" value="P-loop_NTPase"/>
</dbReference>
<dbReference type="InterPro" id="IPR000642">
    <property type="entry name" value="Peptidase_M41"/>
</dbReference>
<dbReference type="InterPro" id="IPR037219">
    <property type="entry name" value="Peptidase_M41-like"/>
</dbReference>
<dbReference type="PANTHER" id="PTHR43655">
    <property type="entry name" value="ATP-DEPENDENT PROTEASE"/>
    <property type="match status" value="1"/>
</dbReference>
<dbReference type="PANTHER" id="PTHR43655:SF19">
    <property type="entry name" value="ATP-DEPENDENT ZINC METALLOPROTEASE FTSH 12, CHLOROPLASTIC"/>
    <property type="match status" value="1"/>
</dbReference>
<dbReference type="Pfam" id="PF00004">
    <property type="entry name" value="AAA"/>
    <property type="match status" value="1"/>
</dbReference>
<dbReference type="Pfam" id="PF17862">
    <property type="entry name" value="AAA_lid_3"/>
    <property type="match status" value="1"/>
</dbReference>
<dbReference type="Pfam" id="PF01434">
    <property type="entry name" value="Peptidase_M41"/>
    <property type="match status" value="1"/>
</dbReference>
<dbReference type="SMART" id="SM00382">
    <property type="entry name" value="AAA"/>
    <property type="match status" value="1"/>
</dbReference>
<dbReference type="SUPFAM" id="SSF140990">
    <property type="entry name" value="FtsH protease domain-like"/>
    <property type="match status" value="1"/>
</dbReference>
<dbReference type="SUPFAM" id="SSF52540">
    <property type="entry name" value="P-loop containing nucleoside triphosphate hydrolases"/>
    <property type="match status" value="1"/>
</dbReference>
<accession>Q9SAJ3</accession>
<accession>Q94C56</accession>
<feature type="transit peptide" description="Chloroplast" evidence="2">
    <location>
        <begin position="1"/>
        <end position="49"/>
    </location>
</feature>
<feature type="transit peptide" description="Thylakoid" evidence="2">
    <location>
        <begin position="50"/>
        <end status="unknown"/>
    </location>
</feature>
<feature type="chain" id="PRO_0000341337" description="ATP-dependent zinc metalloprotease FTSH 12, chloroplastic">
    <location>
        <begin status="unknown"/>
        <end position="1008"/>
    </location>
</feature>
<feature type="transmembrane region" description="Helical" evidence="2">
    <location>
        <begin position="154"/>
        <end position="174"/>
    </location>
</feature>
<feature type="transmembrane region" description="Helical" evidence="2">
    <location>
        <begin position="427"/>
        <end position="447"/>
    </location>
</feature>
<feature type="active site" evidence="1">
    <location>
        <position position="770"/>
    </location>
</feature>
<feature type="binding site" evidence="2">
    <location>
        <begin position="533"/>
        <end position="540"/>
    </location>
    <ligand>
        <name>ATP</name>
        <dbReference type="ChEBI" id="CHEBI:30616"/>
    </ligand>
</feature>
<feature type="binding site" evidence="1">
    <location>
        <position position="769"/>
    </location>
    <ligand>
        <name>Zn(2+)</name>
        <dbReference type="ChEBI" id="CHEBI:29105"/>
        <note>catalytic</note>
    </ligand>
</feature>
<feature type="binding site" evidence="1">
    <location>
        <position position="773"/>
    </location>
    <ligand>
        <name>Zn(2+)</name>
        <dbReference type="ChEBI" id="CHEBI:29105"/>
        <note>catalytic</note>
    </ligand>
</feature>
<feature type="binding site" evidence="1">
    <location>
        <position position="849"/>
    </location>
    <ligand>
        <name>Zn(2+)</name>
        <dbReference type="ChEBI" id="CHEBI:29105"/>
        <note>catalytic</note>
    </ligand>
</feature>
<feature type="helix" evidence="6">
    <location>
        <begin position="120"/>
        <end position="136"/>
    </location>
</feature>
<feature type="helix" evidence="6">
    <location>
        <begin position="139"/>
        <end position="142"/>
    </location>
</feature>
<feature type="helix" evidence="6">
    <location>
        <begin position="145"/>
        <end position="147"/>
    </location>
</feature>
<feature type="helix" evidence="6">
    <location>
        <begin position="150"/>
        <end position="188"/>
    </location>
</feature>
<feature type="helix" evidence="6">
    <location>
        <begin position="200"/>
        <end position="214"/>
    </location>
</feature>
<feature type="strand" evidence="6">
    <location>
        <begin position="217"/>
        <end position="226"/>
    </location>
</feature>
<feature type="strand" evidence="6">
    <location>
        <begin position="228"/>
        <end position="230"/>
    </location>
</feature>
<feature type="strand" evidence="6">
    <location>
        <begin position="232"/>
        <end position="235"/>
    </location>
</feature>
<feature type="strand" evidence="6">
    <location>
        <begin position="241"/>
        <end position="244"/>
    </location>
</feature>
<feature type="helix" evidence="6">
    <location>
        <begin position="257"/>
        <end position="260"/>
    </location>
</feature>
<feature type="helix" evidence="6">
    <location>
        <begin position="267"/>
        <end position="277"/>
    </location>
</feature>
<feature type="helix" evidence="6">
    <location>
        <begin position="291"/>
        <end position="311"/>
    </location>
</feature>
<feature type="strand" evidence="6">
    <location>
        <begin position="313"/>
        <end position="321"/>
    </location>
</feature>
<feature type="helix" evidence="6">
    <location>
        <begin position="323"/>
        <end position="333"/>
    </location>
</feature>
<feature type="helix" evidence="6">
    <location>
        <begin position="347"/>
        <end position="351"/>
    </location>
</feature>
<feature type="helix" evidence="6">
    <location>
        <begin position="352"/>
        <end position="354"/>
    </location>
</feature>
<feature type="helix" evidence="6">
    <location>
        <begin position="362"/>
        <end position="370"/>
    </location>
</feature>
<feature type="strand" evidence="6">
    <location>
        <begin position="377"/>
        <end position="379"/>
    </location>
</feature>
<feature type="strand" evidence="6">
    <location>
        <begin position="391"/>
        <end position="396"/>
    </location>
</feature>
<feature type="helix" evidence="6">
    <location>
        <begin position="406"/>
        <end position="415"/>
    </location>
</feature>
<feature type="strand" evidence="6">
    <location>
        <begin position="419"/>
        <end position="421"/>
    </location>
</feature>
<feature type="helix" evidence="6">
    <location>
        <begin position="427"/>
        <end position="471"/>
    </location>
</feature>
<feature type="turn" evidence="6">
    <location>
        <begin position="472"/>
        <end position="474"/>
    </location>
</feature>
<feature type="helix" evidence="6">
    <location>
        <begin position="493"/>
        <end position="496"/>
    </location>
</feature>
<feature type="strand" evidence="6">
    <location>
        <begin position="499"/>
        <end position="501"/>
    </location>
</feature>
<feature type="helix" evidence="6">
    <location>
        <begin position="502"/>
        <end position="512"/>
    </location>
</feature>
<feature type="helix" evidence="6">
    <location>
        <begin position="516"/>
        <end position="519"/>
    </location>
</feature>
<feature type="turn" evidence="6">
    <location>
        <begin position="520"/>
        <end position="522"/>
    </location>
</feature>
<feature type="strand" evidence="6">
    <location>
        <begin position="528"/>
        <end position="534"/>
    </location>
</feature>
<feature type="helix" evidence="6">
    <location>
        <begin position="539"/>
        <end position="550"/>
    </location>
</feature>
<feature type="strand" evidence="6">
    <location>
        <begin position="554"/>
        <end position="559"/>
    </location>
</feature>
<feature type="helix" evidence="7">
    <location>
        <begin position="560"/>
        <end position="562"/>
    </location>
</feature>
<feature type="helix" evidence="6">
    <location>
        <begin position="571"/>
        <end position="582"/>
    </location>
</feature>
<feature type="strand" evidence="6">
    <location>
        <begin position="585"/>
        <end position="591"/>
    </location>
</feature>
<feature type="helix" evidence="6">
    <location>
        <begin position="593"/>
        <end position="595"/>
    </location>
</feature>
<feature type="turn" evidence="6">
    <location>
        <begin position="599"/>
        <end position="603"/>
    </location>
</feature>
<feature type="helix" evidence="6">
    <location>
        <begin position="605"/>
        <end position="618"/>
    </location>
</feature>
<feature type="turn" evidence="6">
    <location>
        <begin position="623"/>
        <end position="625"/>
    </location>
</feature>
<feature type="strand" evidence="6">
    <location>
        <begin position="629"/>
        <end position="631"/>
    </location>
</feature>
<feature type="helix" evidence="6">
    <location>
        <begin position="632"/>
        <end position="634"/>
    </location>
</feature>
<feature type="strand" evidence="6">
    <location>
        <begin position="636"/>
        <end position="641"/>
    </location>
</feature>
<feature type="helix" evidence="6">
    <location>
        <begin position="645"/>
        <end position="647"/>
    </location>
</feature>
<feature type="turn" evidence="6">
    <location>
        <begin position="650"/>
        <end position="652"/>
    </location>
</feature>
<feature type="turn" evidence="6">
    <location>
        <begin position="655"/>
        <end position="657"/>
    </location>
</feature>
<feature type="strand" evidence="6">
    <location>
        <begin position="660"/>
        <end position="663"/>
    </location>
</feature>
<feature type="helix" evidence="6">
    <location>
        <begin position="669"/>
        <end position="679"/>
    </location>
</feature>
<feature type="strand" evidence="6">
    <location>
        <begin position="681"/>
        <end position="683"/>
    </location>
</feature>
<feature type="helix" evidence="6">
    <location>
        <begin position="691"/>
        <end position="693"/>
    </location>
</feature>
<feature type="helix" evidence="6">
    <location>
        <begin position="696"/>
        <end position="698"/>
    </location>
</feature>
<feature type="helix" evidence="6">
    <location>
        <begin position="703"/>
        <end position="719"/>
    </location>
</feature>
<feature type="strand" evidence="6">
    <location>
        <begin position="723"/>
        <end position="725"/>
    </location>
</feature>
<feature type="helix" evidence="6">
    <location>
        <begin position="727"/>
        <end position="739"/>
    </location>
</feature>
<feature type="turn" evidence="6">
    <location>
        <begin position="740"/>
        <end position="743"/>
    </location>
</feature>
<feature type="helix" evidence="6">
    <location>
        <begin position="748"/>
        <end position="757"/>
    </location>
</feature>
<feature type="helix" evidence="6">
    <location>
        <begin position="761"/>
        <end position="777"/>
    </location>
</feature>
<feature type="strand" evidence="6">
    <location>
        <begin position="780"/>
        <end position="782"/>
    </location>
</feature>
<feature type="strand" evidence="6">
    <location>
        <begin position="785"/>
        <end position="792"/>
    </location>
</feature>
<feature type="helix" evidence="6">
    <location>
        <begin position="793"/>
        <end position="795"/>
    </location>
</feature>
<feature type="strand" evidence="6">
    <location>
        <begin position="797"/>
        <end position="804"/>
    </location>
</feature>
<feature type="helix" evidence="6">
    <location>
        <begin position="807"/>
        <end position="812"/>
    </location>
</feature>
<feature type="helix" evidence="6">
    <location>
        <begin position="817"/>
        <end position="838"/>
    </location>
</feature>
<feature type="helix" evidence="6">
    <location>
        <begin position="847"/>
        <end position="861"/>
    </location>
</feature>
<feature type="turn" evidence="6">
    <location>
        <begin position="867"/>
        <end position="869"/>
    </location>
</feature>
<feature type="strand" evidence="6">
    <location>
        <begin position="870"/>
        <end position="872"/>
    </location>
</feature>
<feature type="strand" evidence="6">
    <location>
        <begin position="875"/>
        <end position="877"/>
    </location>
</feature>
<feature type="helix" evidence="7">
    <location>
        <begin position="895"/>
        <end position="897"/>
    </location>
</feature>
<feature type="helix" evidence="6">
    <location>
        <begin position="910"/>
        <end position="935"/>
    </location>
</feature>
<feature type="helix" evidence="6">
    <location>
        <begin position="938"/>
        <end position="950"/>
    </location>
</feature>
<feature type="strand" evidence="6">
    <location>
        <begin position="951"/>
        <end position="954"/>
    </location>
</feature>
<feature type="helix" evidence="6">
    <location>
        <begin position="955"/>
        <end position="961"/>
    </location>
</feature>
<feature type="turn" evidence="7">
    <location>
        <begin position="963"/>
        <end position="965"/>
    </location>
</feature>
<protein>
    <recommendedName>
        <fullName>ATP-dependent zinc metalloprotease FTSH 12, chloroplastic</fullName>
        <shortName>AtFTSH12</shortName>
        <ecNumber>3.4.24.-</ecNumber>
    </recommendedName>
</protein>
<name>FTSHC_ARATH</name>
<organism>
    <name type="scientific">Arabidopsis thaliana</name>
    <name type="common">Mouse-ear cress</name>
    <dbReference type="NCBI Taxonomy" id="3702"/>
    <lineage>
        <taxon>Eukaryota</taxon>
        <taxon>Viridiplantae</taxon>
        <taxon>Streptophyta</taxon>
        <taxon>Embryophyta</taxon>
        <taxon>Tracheophyta</taxon>
        <taxon>Spermatophyta</taxon>
        <taxon>Magnoliopsida</taxon>
        <taxon>eudicotyledons</taxon>
        <taxon>Gunneridae</taxon>
        <taxon>Pentapetalae</taxon>
        <taxon>rosids</taxon>
        <taxon>malvids</taxon>
        <taxon>Brassicales</taxon>
        <taxon>Brassicaceae</taxon>
        <taxon>Camelineae</taxon>
        <taxon>Arabidopsis</taxon>
    </lineage>
</organism>
<sequence length="1008" mass="115105">MEIAISYKPNPLISSSTQLLKRSKSFGLVRFPAKYGLGATRKKQLFRVYASESSSGSSSNSDGGFSWVRLAQSIRLGAERIGEKIGESVKTEIGFDSEEASGRVNEYVARVKDSVHKGHHELTRFKNETVPSFIDWNKWEHWKDIRNWDGKRVAALFIYAFALLLSCQRVYVAIQAPRVERERRELTESFMEALIPEPSPGNIEKFKRNMWRKATPKGLKLKRFIEAPDGTLVHDSSYVGENAWDDDLETTEGSLKKIIGRNARIQTEAKKKLSQDLGVSGEIGDSVGNWRERLATWKEMLEREKLSEQLNSSAAKYVVEFDMKEVEKSLREDVIGRTSETEGTRALWISKRWWRYRPKLPYTYFLQKLDSSEVAAVVFTEDLKRLYVTMKEGFPLEYIVDIPLDPYLFETICNAGVEVDLLQKRQIHYFMKVFIALLPGILILWFIRESAMLLLITSKRFLYKKYNQLFDMAYAENFILPVGDVSETKSMYKEVVLGGDVWDLLDELMIYMGNPMQYYEKDVAFVRGVLLSGPPGTGKTLFARTLAKESGLPFVFASGAEFTDSEKSGAAKINEMFSIARRNAPAFVFVDEIDAIAGRHARKDPRRRATFEALIAQLDGEKEKTGIDRFSLRQAVIFICATNRPDELDLEFVRSGRIDRRLYIGLPDAKQRVQIFGVHSAGKNLAEDIDFGKLVFRTVGFSGADIRNLVNEAAIMSVRKGRSYIYQQDIVDVLDKQLLEGMGVLLTEEEQQKCEQSVSYEKKRLLAVHEAGHIVLAHLFPRFDWHAFSQLLPGGKETAVSVFYPREDMVDQGYTTFGYMKMQMVVAHGGRCAERVVFGDNVTDGGKDDLEKITKIAREMVISPQSARLGLTQLVKKIGMVDLPDNPDGELIKYRWDHPHVMPAEMSVEVSELFTRELTRYIEETEELAMNALRANRHILDLITRELLEKSRITGLEVEEKMKDLSPLMFEDFVKPFQINPDDEELLPHKDRVSYQPVDLRAAPLHRS</sequence>
<keyword id="KW-0002">3D-structure</keyword>
<keyword id="KW-0067">ATP-binding</keyword>
<keyword id="KW-0150">Chloroplast</keyword>
<keyword id="KW-0378">Hydrolase</keyword>
<keyword id="KW-0472">Membrane</keyword>
<keyword id="KW-0479">Metal-binding</keyword>
<keyword id="KW-0482">Metalloprotease</keyword>
<keyword id="KW-0547">Nucleotide-binding</keyword>
<keyword id="KW-0934">Plastid</keyword>
<keyword id="KW-0645">Protease</keyword>
<keyword id="KW-1185">Reference proteome</keyword>
<keyword id="KW-0793">Thylakoid</keyword>
<keyword id="KW-0809">Transit peptide</keyword>
<keyword id="KW-0812">Transmembrane</keyword>
<keyword id="KW-1133">Transmembrane helix</keyword>
<keyword id="KW-0862">Zinc</keyword>
<proteinExistence type="evidence at protein level"/>
<gene>
    <name type="primary">FTSH12</name>
    <name type="ordered locus">At1g79560</name>
    <name type="ORF">T8K14.2</name>
</gene>